<sequence>MSAAIWVVVPAAGRGARFGAPMPKQYLQAGGQILLAHTLDALLAHPAVAGAMVVIGPDDADWPGWSEWAGKPVLTCIGGATRAASVLAGLQALPETVRADEFVLVHDAARPNLSPADLGRLLEVGRADPVGAILAAPVRDTLKRAGDDGGIDGTEPRERLWRALTPQLFRRHQLSRALSEAATAGVEVTDEAMAMERQGQRPLLVEGSEDNFKVTTPADLDRFEFVLSRRAG</sequence>
<evidence type="ECO:0000255" key="1">
    <source>
        <dbReference type="HAMAP-Rule" id="MF_00108"/>
    </source>
</evidence>
<feature type="chain" id="PRO_1000094351" description="2-C-methyl-D-erythritol 4-phosphate cytidylyltransferase">
    <location>
        <begin position="1"/>
        <end position="232"/>
    </location>
</feature>
<feature type="site" description="Transition state stabilizer" evidence="1">
    <location>
        <position position="17"/>
    </location>
</feature>
<feature type="site" description="Transition state stabilizer" evidence="1">
    <location>
        <position position="24"/>
    </location>
</feature>
<feature type="site" description="Positions MEP for the nucleophilic attack" evidence="1">
    <location>
        <position position="157"/>
    </location>
</feature>
<feature type="site" description="Positions MEP for the nucleophilic attack" evidence="1">
    <location>
        <position position="213"/>
    </location>
</feature>
<accession>B4SR88</accession>
<proteinExistence type="inferred from homology"/>
<comment type="function">
    <text evidence="1">Catalyzes the formation of 4-diphosphocytidyl-2-C-methyl-D-erythritol from CTP and 2-C-methyl-D-erythritol 4-phosphate (MEP).</text>
</comment>
<comment type="catalytic activity">
    <reaction evidence="1">
        <text>2-C-methyl-D-erythritol 4-phosphate + CTP + H(+) = 4-CDP-2-C-methyl-D-erythritol + diphosphate</text>
        <dbReference type="Rhea" id="RHEA:13429"/>
        <dbReference type="ChEBI" id="CHEBI:15378"/>
        <dbReference type="ChEBI" id="CHEBI:33019"/>
        <dbReference type="ChEBI" id="CHEBI:37563"/>
        <dbReference type="ChEBI" id="CHEBI:57823"/>
        <dbReference type="ChEBI" id="CHEBI:58262"/>
        <dbReference type="EC" id="2.7.7.60"/>
    </reaction>
</comment>
<comment type="pathway">
    <text evidence="1">Isoprenoid biosynthesis; isopentenyl diphosphate biosynthesis via DXP pathway; isopentenyl diphosphate from 1-deoxy-D-xylulose 5-phosphate: step 2/6.</text>
</comment>
<comment type="similarity">
    <text evidence="1">Belongs to the IspD/TarI cytidylyltransferase family. IspD subfamily.</text>
</comment>
<gene>
    <name evidence="1" type="primary">ispD</name>
    <name type="ordered locus">Smal_1454</name>
</gene>
<keyword id="KW-0414">Isoprene biosynthesis</keyword>
<keyword id="KW-0548">Nucleotidyltransferase</keyword>
<keyword id="KW-0808">Transferase</keyword>
<dbReference type="EC" id="2.7.7.60" evidence="1"/>
<dbReference type="EMBL" id="CP001111">
    <property type="protein sequence ID" value="ACF51159.1"/>
    <property type="molecule type" value="Genomic_DNA"/>
</dbReference>
<dbReference type="RefSeq" id="WP_004152847.1">
    <property type="nucleotide sequence ID" value="NC_011071.1"/>
</dbReference>
<dbReference type="SMR" id="B4SR88"/>
<dbReference type="STRING" id="391008.Smal_1454"/>
<dbReference type="KEGG" id="smt:Smal_1454"/>
<dbReference type="eggNOG" id="COG1211">
    <property type="taxonomic scope" value="Bacteria"/>
</dbReference>
<dbReference type="HOGENOM" id="CLU_061281_3_1_6"/>
<dbReference type="OrthoDB" id="9806837at2"/>
<dbReference type="UniPathway" id="UPA00056">
    <property type="reaction ID" value="UER00093"/>
</dbReference>
<dbReference type="Proteomes" id="UP000001867">
    <property type="component" value="Chromosome"/>
</dbReference>
<dbReference type="GO" id="GO:0050518">
    <property type="term" value="F:2-C-methyl-D-erythritol 4-phosphate cytidylyltransferase activity"/>
    <property type="evidence" value="ECO:0007669"/>
    <property type="project" value="UniProtKB-UniRule"/>
</dbReference>
<dbReference type="GO" id="GO:0019288">
    <property type="term" value="P:isopentenyl diphosphate biosynthetic process, methylerythritol 4-phosphate pathway"/>
    <property type="evidence" value="ECO:0007669"/>
    <property type="project" value="UniProtKB-UniRule"/>
</dbReference>
<dbReference type="CDD" id="cd02516">
    <property type="entry name" value="CDP-ME_synthetase"/>
    <property type="match status" value="1"/>
</dbReference>
<dbReference type="FunFam" id="3.90.550.10:FF:000003">
    <property type="entry name" value="2-C-methyl-D-erythritol 4-phosphate cytidylyltransferase"/>
    <property type="match status" value="1"/>
</dbReference>
<dbReference type="Gene3D" id="3.90.550.10">
    <property type="entry name" value="Spore Coat Polysaccharide Biosynthesis Protein SpsA, Chain A"/>
    <property type="match status" value="1"/>
</dbReference>
<dbReference type="HAMAP" id="MF_00108">
    <property type="entry name" value="IspD"/>
    <property type="match status" value="1"/>
</dbReference>
<dbReference type="InterPro" id="IPR001228">
    <property type="entry name" value="IspD"/>
</dbReference>
<dbReference type="InterPro" id="IPR034683">
    <property type="entry name" value="IspD/TarI"/>
</dbReference>
<dbReference type="InterPro" id="IPR050088">
    <property type="entry name" value="IspD/TarI_cytidylyltransf_bact"/>
</dbReference>
<dbReference type="InterPro" id="IPR018294">
    <property type="entry name" value="ISPD_synthase_CS"/>
</dbReference>
<dbReference type="InterPro" id="IPR029044">
    <property type="entry name" value="Nucleotide-diphossugar_trans"/>
</dbReference>
<dbReference type="NCBIfam" id="TIGR00453">
    <property type="entry name" value="ispD"/>
    <property type="match status" value="1"/>
</dbReference>
<dbReference type="PANTHER" id="PTHR32125">
    <property type="entry name" value="2-C-METHYL-D-ERYTHRITOL 4-PHOSPHATE CYTIDYLYLTRANSFERASE, CHLOROPLASTIC"/>
    <property type="match status" value="1"/>
</dbReference>
<dbReference type="PANTHER" id="PTHR32125:SF4">
    <property type="entry name" value="2-C-METHYL-D-ERYTHRITOL 4-PHOSPHATE CYTIDYLYLTRANSFERASE, CHLOROPLASTIC"/>
    <property type="match status" value="1"/>
</dbReference>
<dbReference type="Pfam" id="PF01128">
    <property type="entry name" value="IspD"/>
    <property type="match status" value="1"/>
</dbReference>
<dbReference type="SUPFAM" id="SSF53448">
    <property type="entry name" value="Nucleotide-diphospho-sugar transferases"/>
    <property type="match status" value="1"/>
</dbReference>
<dbReference type="PROSITE" id="PS01295">
    <property type="entry name" value="ISPD"/>
    <property type="match status" value="1"/>
</dbReference>
<protein>
    <recommendedName>
        <fullName evidence="1">2-C-methyl-D-erythritol 4-phosphate cytidylyltransferase</fullName>
        <ecNumber evidence="1">2.7.7.60</ecNumber>
    </recommendedName>
    <alternativeName>
        <fullName evidence="1">4-diphosphocytidyl-2C-methyl-D-erythritol synthase</fullName>
    </alternativeName>
    <alternativeName>
        <fullName evidence="1">MEP cytidylyltransferase</fullName>
        <shortName evidence="1">MCT</shortName>
    </alternativeName>
</protein>
<name>ISPD_STRM5</name>
<reference key="1">
    <citation type="submission" date="2008-06" db="EMBL/GenBank/DDBJ databases">
        <title>Complete sequence of Stenotrophomonas maltophilia R551-3.</title>
        <authorList>
            <consortium name="US DOE Joint Genome Institute"/>
            <person name="Lucas S."/>
            <person name="Copeland A."/>
            <person name="Lapidus A."/>
            <person name="Glavina del Rio T."/>
            <person name="Dalin E."/>
            <person name="Tice H."/>
            <person name="Pitluck S."/>
            <person name="Chain P."/>
            <person name="Malfatti S."/>
            <person name="Shin M."/>
            <person name="Vergez L."/>
            <person name="Lang D."/>
            <person name="Schmutz J."/>
            <person name="Larimer F."/>
            <person name="Land M."/>
            <person name="Hauser L."/>
            <person name="Kyrpides N."/>
            <person name="Mikhailova N."/>
            <person name="Taghavi S."/>
            <person name="Monchy S."/>
            <person name="Newman L."/>
            <person name="Vangronsveld J."/>
            <person name="van der Lelie D."/>
            <person name="Richardson P."/>
        </authorList>
    </citation>
    <scope>NUCLEOTIDE SEQUENCE [LARGE SCALE GENOMIC DNA]</scope>
    <source>
        <strain>R551-3</strain>
    </source>
</reference>
<organism>
    <name type="scientific">Stenotrophomonas maltophilia (strain R551-3)</name>
    <dbReference type="NCBI Taxonomy" id="391008"/>
    <lineage>
        <taxon>Bacteria</taxon>
        <taxon>Pseudomonadati</taxon>
        <taxon>Pseudomonadota</taxon>
        <taxon>Gammaproteobacteria</taxon>
        <taxon>Lysobacterales</taxon>
        <taxon>Lysobacteraceae</taxon>
        <taxon>Stenotrophomonas</taxon>
        <taxon>Stenotrophomonas maltophilia group</taxon>
    </lineage>
</organism>